<protein>
    <recommendedName>
        <fullName evidence="1">Ribosomal RNA small subunit methyltransferase A</fullName>
        <ecNumber evidence="1">2.1.1.182</ecNumber>
    </recommendedName>
    <alternativeName>
        <fullName evidence="1">16S rRNA (adenine(1518)-N(6)/adenine(1519)-N(6))-dimethyltransferase</fullName>
    </alternativeName>
    <alternativeName>
        <fullName evidence="1">16S rRNA dimethyladenosine transferase</fullName>
    </alternativeName>
    <alternativeName>
        <fullName evidence="1">16S rRNA dimethylase</fullName>
    </alternativeName>
    <alternativeName>
        <fullName evidence="1">S-adenosylmethionine-6-N', N'-adenosyl(rRNA) dimethyltransferase</fullName>
    </alternativeName>
</protein>
<proteinExistence type="inferred from homology"/>
<sequence>MNNRVHQGHLARKRFGQNFLNDRFVIDSIVSAINPQKGQAMVEIGPGLAALTEPVGERLDKLTVIELDRDLAARLQTHPFLGPKLTIYQQDAMTMNFGELSAQLGQPLRVFGNLPYNISTPLMFHLFSYTDAIADMHFMLQKEVVNRLVAGPNSKAYGRLSVMAQYYCQVIPVLEVPPSAFTPPPKVDSAVVRLVPHATMPYPVKDIRVLSRITTEAFNQRRKTIRNSLGNLFSVETLTEMGIDPAMRAENISVAQYCQMANYLSENAPLKES</sequence>
<organism>
    <name type="scientific">Salmonella paratyphi C (strain RKS4594)</name>
    <dbReference type="NCBI Taxonomy" id="476213"/>
    <lineage>
        <taxon>Bacteria</taxon>
        <taxon>Pseudomonadati</taxon>
        <taxon>Pseudomonadota</taxon>
        <taxon>Gammaproteobacteria</taxon>
        <taxon>Enterobacterales</taxon>
        <taxon>Enterobacteriaceae</taxon>
        <taxon>Salmonella</taxon>
    </lineage>
</organism>
<keyword id="KW-0963">Cytoplasm</keyword>
<keyword id="KW-0489">Methyltransferase</keyword>
<keyword id="KW-0694">RNA-binding</keyword>
<keyword id="KW-0698">rRNA processing</keyword>
<keyword id="KW-0949">S-adenosyl-L-methionine</keyword>
<keyword id="KW-0808">Transferase</keyword>
<accession>C0Q5E7</accession>
<reference key="1">
    <citation type="journal article" date="2009" name="PLoS ONE">
        <title>Salmonella paratyphi C: genetic divergence from Salmonella choleraesuis and pathogenic convergence with Salmonella typhi.</title>
        <authorList>
            <person name="Liu W.-Q."/>
            <person name="Feng Y."/>
            <person name="Wang Y."/>
            <person name="Zou Q.-H."/>
            <person name="Chen F."/>
            <person name="Guo J.-T."/>
            <person name="Peng Y.-H."/>
            <person name="Jin Y."/>
            <person name="Li Y.-G."/>
            <person name="Hu S.-N."/>
            <person name="Johnston R.N."/>
            <person name="Liu G.-R."/>
            <person name="Liu S.-L."/>
        </authorList>
    </citation>
    <scope>NUCLEOTIDE SEQUENCE [LARGE SCALE GENOMIC DNA]</scope>
    <source>
        <strain>RKS4594</strain>
    </source>
</reference>
<gene>
    <name evidence="1" type="primary">rsmA</name>
    <name evidence="1" type="synonym">ksgA</name>
    <name type="ordered locus">SPC_0097</name>
</gene>
<comment type="function">
    <text evidence="1">Specifically dimethylates two adjacent adenosines (A1518 and A1519) in the loop of a conserved hairpin near the 3'-end of 16S rRNA in the 30S particle. May play a critical role in biogenesis of 30S subunits.</text>
</comment>
<comment type="catalytic activity">
    <reaction evidence="1">
        <text>adenosine(1518)/adenosine(1519) in 16S rRNA + 4 S-adenosyl-L-methionine = N(6)-dimethyladenosine(1518)/N(6)-dimethyladenosine(1519) in 16S rRNA + 4 S-adenosyl-L-homocysteine + 4 H(+)</text>
        <dbReference type="Rhea" id="RHEA:19609"/>
        <dbReference type="Rhea" id="RHEA-COMP:10232"/>
        <dbReference type="Rhea" id="RHEA-COMP:10233"/>
        <dbReference type="ChEBI" id="CHEBI:15378"/>
        <dbReference type="ChEBI" id="CHEBI:57856"/>
        <dbReference type="ChEBI" id="CHEBI:59789"/>
        <dbReference type="ChEBI" id="CHEBI:74411"/>
        <dbReference type="ChEBI" id="CHEBI:74493"/>
        <dbReference type="EC" id="2.1.1.182"/>
    </reaction>
</comment>
<comment type="subcellular location">
    <subcellularLocation>
        <location evidence="1">Cytoplasm</location>
    </subcellularLocation>
</comment>
<comment type="similarity">
    <text evidence="1">Belongs to the class I-like SAM-binding methyltransferase superfamily. rRNA adenine N(6)-methyltransferase family. RsmA subfamily.</text>
</comment>
<name>RSMA_SALPC</name>
<dbReference type="EC" id="2.1.1.182" evidence="1"/>
<dbReference type="EMBL" id="CP000857">
    <property type="protein sequence ID" value="ACN44289.1"/>
    <property type="molecule type" value="Genomic_DNA"/>
</dbReference>
<dbReference type="RefSeq" id="WP_001065397.1">
    <property type="nucleotide sequence ID" value="NC_012125.1"/>
</dbReference>
<dbReference type="SMR" id="C0Q5E7"/>
<dbReference type="KEGG" id="sei:SPC_0097"/>
<dbReference type="HOGENOM" id="CLU_041220_0_1_6"/>
<dbReference type="Proteomes" id="UP000001599">
    <property type="component" value="Chromosome"/>
</dbReference>
<dbReference type="GO" id="GO:0005829">
    <property type="term" value="C:cytosol"/>
    <property type="evidence" value="ECO:0007669"/>
    <property type="project" value="TreeGrafter"/>
</dbReference>
<dbReference type="GO" id="GO:0052908">
    <property type="term" value="F:16S rRNA (adenine(1518)-N(6)/adenine(1519)-N(6))-dimethyltransferase activity"/>
    <property type="evidence" value="ECO:0007669"/>
    <property type="project" value="UniProtKB-EC"/>
</dbReference>
<dbReference type="GO" id="GO:0003723">
    <property type="term" value="F:RNA binding"/>
    <property type="evidence" value="ECO:0007669"/>
    <property type="project" value="UniProtKB-KW"/>
</dbReference>
<dbReference type="FunFam" id="1.10.8.100:FF:000001">
    <property type="entry name" value="Ribosomal RNA small subunit methyltransferase A"/>
    <property type="match status" value="1"/>
</dbReference>
<dbReference type="FunFam" id="3.40.50.150:FF:000006">
    <property type="entry name" value="Ribosomal RNA small subunit methyltransferase A"/>
    <property type="match status" value="1"/>
</dbReference>
<dbReference type="Gene3D" id="1.10.8.100">
    <property type="entry name" value="Ribosomal RNA adenine dimethylase-like, domain 2"/>
    <property type="match status" value="1"/>
</dbReference>
<dbReference type="Gene3D" id="3.40.50.150">
    <property type="entry name" value="Vaccinia Virus protein VP39"/>
    <property type="match status" value="1"/>
</dbReference>
<dbReference type="HAMAP" id="MF_00607">
    <property type="entry name" value="16SrRNA_methyltr_A"/>
    <property type="match status" value="1"/>
</dbReference>
<dbReference type="InterPro" id="IPR001737">
    <property type="entry name" value="KsgA/Erm"/>
</dbReference>
<dbReference type="InterPro" id="IPR023165">
    <property type="entry name" value="rRNA_Ade_diMease-like_C"/>
</dbReference>
<dbReference type="InterPro" id="IPR020596">
    <property type="entry name" value="rRNA_Ade_Mease_Trfase_CS"/>
</dbReference>
<dbReference type="InterPro" id="IPR020598">
    <property type="entry name" value="rRNA_Ade_methylase_Trfase_N"/>
</dbReference>
<dbReference type="InterPro" id="IPR011530">
    <property type="entry name" value="rRNA_adenine_dimethylase"/>
</dbReference>
<dbReference type="InterPro" id="IPR029063">
    <property type="entry name" value="SAM-dependent_MTases_sf"/>
</dbReference>
<dbReference type="NCBIfam" id="TIGR00755">
    <property type="entry name" value="ksgA"/>
    <property type="match status" value="1"/>
</dbReference>
<dbReference type="PANTHER" id="PTHR11727">
    <property type="entry name" value="DIMETHYLADENOSINE TRANSFERASE"/>
    <property type="match status" value="1"/>
</dbReference>
<dbReference type="PANTHER" id="PTHR11727:SF7">
    <property type="entry name" value="DIMETHYLADENOSINE TRANSFERASE-RELATED"/>
    <property type="match status" value="1"/>
</dbReference>
<dbReference type="Pfam" id="PF00398">
    <property type="entry name" value="RrnaAD"/>
    <property type="match status" value="1"/>
</dbReference>
<dbReference type="SMART" id="SM00650">
    <property type="entry name" value="rADc"/>
    <property type="match status" value="1"/>
</dbReference>
<dbReference type="SUPFAM" id="SSF53335">
    <property type="entry name" value="S-adenosyl-L-methionine-dependent methyltransferases"/>
    <property type="match status" value="1"/>
</dbReference>
<dbReference type="PROSITE" id="PS01131">
    <property type="entry name" value="RRNA_A_DIMETH"/>
    <property type="match status" value="1"/>
</dbReference>
<dbReference type="PROSITE" id="PS51689">
    <property type="entry name" value="SAM_RNA_A_N6_MT"/>
    <property type="match status" value="1"/>
</dbReference>
<feature type="chain" id="PRO_1000194397" description="Ribosomal RNA small subunit methyltransferase A">
    <location>
        <begin position="1"/>
        <end position="273"/>
    </location>
</feature>
<feature type="binding site" evidence="1">
    <location>
        <position position="18"/>
    </location>
    <ligand>
        <name>S-adenosyl-L-methionine</name>
        <dbReference type="ChEBI" id="CHEBI:59789"/>
    </ligand>
</feature>
<feature type="binding site" evidence="1">
    <location>
        <position position="20"/>
    </location>
    <ligand>
        <name>S-adenosyl-L-methionine</name>
        <dbReference type="ChEBI" id="CHEBI:59789"/>
    </ligand>
</feature>
<feature type="binding site" evidence="1">
    <location>
        <position position="45"/>
    </location>
    <ligand>
        <name>S-adenosyl-L-methionine</name>
        <dbReference type="ChEBI" id="CHEBI:59789"/>
    </ligand>
</feature>
<feature type="binding site" evidence="1">
    <location>
        <position position="66"/>
    </location>
    <ligand>
        <name>S-adenosyl-L-methionine</name>
        <dbReference type="ChEBI" id="CHEBI:59789"/>
    </ligand>
</feature>
<feature type="binding site" evidence="1">
    <location>
        <position position="91"/>
    </location>
    <ligand>
        <name>S-adenosyl-L-methionine</name>
        <dbReference type="ChEBI" id="CHEBI:59789"/>
    </ligand>
</feature>
<feature type="binding site" evidence="1">
    <location>
        <position position="113"/>
    </location>
    <ligand>
        <name>S-adenosyl-L-methionine</name>
        <dbReference type="ChEBI" id="CHEBI:59789"/>
    </ligand>
</feature>
<evidence type="ECO:0000255" key="1">
    <source>
        <dbReference type="HAMAP-Rule" id="MF_00607"/>
    </source>
</evidence>